<proteinExistence type="inferred from homology"/>
<organism>
    <name type="scientific">Streptococcus pyogenes serotype M1</name>
    <dbReference type="NCBI Taxonomy" id="301447"/>
    <lineage>
        <taxon>Bacteria</taxon>
        <taxon>Bacillati</taxon>
        <taxon>Bacillota</taxon>
        <taxon>Bacilli</taxon>
        <taxon>Lactobacillales</taxon>
        <taxon>Streptococcaceae</taxon>
        <taxon>Streptococcus</taxon>
    </lineage>
</organism>
<name>RL35_STRP1</name>
<gene>
    <name evidence="1" type="primary">rpmI</name>
    <name type="ordered locus">SPy_0805</name>
    <name type="ordered locus">M5005_Spy0620</name>
</gene>
<accession>P66280</accession>
<accession>Q48ZI0</accession>
<accession>Q9A0E9</accession>
<dbReference type="EMBL" id="AE004092">
    <property type="protein sequence ID" value="AAK33742.1"/>
    <property type="molecule type" value="Genomic_DNA"/>
</dbReference>
<dbReference type="EMBL" id="CP000017">
    <property type="protein sequence ID" value="AAZ51238.1"/>
    <property type="molecule type" value="Genomic_DNA"/>
</dbReference>
<dbReference type="RefSeq" id="NP_269021.1">
    <property type="nucleotide sequence ID" value="NC_002737.2"/>
</dbReference>
<dbReference type="SMR" id="P66280"/>
<dbReference type="PaxDb" id="1314-HKU360_00631"/>
<dbReference type="KEGG" id="spy:SPy_0805"/>
<dbReference type="KEGG" id="spz:M5005_Spy0620"/>
<dbReference type="PATRIC" id="fig|160490.10.peg.688"/>
<dbReference type="HOGENOM" id="CLU_169643_3_1_9"/>
<dbReference type="OMA" id="PKIKTHR"/>
<dbReference type="PRO" id="PR:P66280"/>
<dbReference type="Proteomes" id="UP000000750">
    <property type="component" value="Chromosome"/>
</dbReference>
<dbReference type="GO" id="GO:0022625">
    <property type="term" value="C:cytosolic large ribosomal subunit"/>
    <property type="evidence" value="ECO:0007669"/>
    <property type="project" value="TreeGrafter"/>
</dbReference>
<dbReference type="GO" id="GO:0003735">
    <property type="term" value="F:structural constituent of ribosome"/>
    <property type="evidence" value="ECO:0007669"/>
    <property type="project" value="InterPro"/>
</dbReference>
<dbReference type="GO" id="GO:0006412">
    <property type="term" value="P:translation"/>
    <property type="evidence" value="ECO:0007669"/>
    <property type="project" value="UniProtKB-UniRule"/>
</dbReference>
<dbReference type="FunFam" id="4.10.410.60:FF:000001">
    <property type="entry name" value="50S ribosomal protein L35"/>
    <property type="match status" value="1"/>
</dbReference>
<dbReference type="Gene3D" id="4.10.410.60">
    <property type="match status" value="1"/>
</dbReference>
<dbReference type="HAMAP" id="MF_00514">
    <property type="entry name" value="Ribosomal_bL35"/>
    <property type="match status" value="1"/>
</dbReference>
<dbReference type="InterPro" id="IPR001706">
    <property type="entry name" value="Ribosomal_bL35"/>
</dbReference>
<dbReference type="InterPro" id="IPR021137">
    <property type="entry name" value="Ribosomal_bL35-like"/>
</dbReference>
<dbReference type="InterPro" id="IPR018265">
    <property type="entry name" value="Ribosomal_bL35_CS"/>
</dbReference>
<dbReference type="InterPro" id="IPR037229">
    <property type="entry name" value="Ribosomal_bL35_sf"/>
</dbReference>
<dbReference type="NCBIfam" id="TIGR00001">
    <property type="entry name" value="rpmI_bact"/>
    <property type="match status" value="1"/>
</dbReference>
<dbReference type="PANTHER" id="PTHR33343">
    <property type="entry name" value="54S RIBOSOMAL PROTEIN BL35M"/>
    <property type="match status" value="1"/>
</dbReference>
<dbReference type="PANTHER" id="PTHR33343:SF1">
    <property type="entry name" value="LARGE RIBOSOMAL SUBUNIT PROTEIN BL35M"/>
    <property type="match status" value="1"/>
</dbReference>
<dbReference type="Pfam" id="PF01632">
    <property type="entry name" value="Ribosomal_L35p"/>
    <property type="match status" value="1"/>
</dbReference>
<dbReference type="PRINTS" id="PR00064">
    <property type="entry name" value="RIBOSOMALL35"/>
</dbReference>
<dbReference type="SUPFAM" id="SSF143034">
    <property type="entry name" value="L35p-like"/>
    <property type="match status" value="1"/>
</dbReference>
<dbReference type="PROSITE" id="PS00936">
    <property type="entry name" value="RIBOSOMAL_L35"/>
    <property type="match status" value="1"/>
</dbReference>
<evidence type="ECO:0000255" key="1">
    <source>
        <dbReference type="HAMAP-Rule" id="MF_00514"/>
    </source>
</evidence>
<evidence type="ECO:0000256" key="2">
    <source>
        <dbReference type="SAM" id="MobiDB-lite"/>
    </source>
</evidence>
<evidence type="ECO:0000305" key="3"/>
<reference key="1">
    <citation type="journal article" date="2001" name="Proc. Natl. Acad. Sci. U.S.A.">
        <title>Complete genome sequence of an M1 strain of Streptococcus pyogenes.</title>
        <authorList>
            <person name="Ferretti J.J."/>
            <person name="McShan W.M."/>
            <person name="Ajdic D.J."/>
            <person name="Savic D.J."/>
            <person name="Savic G."/>
            <person name="Lyon K."/>
            <person name="Primeaux C."/>
            <person name="Sezate S."/>
            <person name="Suvorov A.N."/>
            <person name="Kenton S."/>
            <person name="Lai H.S."/>
            <person name="Lin S.P."/>
            <person name="Qian Y."/>
            <person name="Jia H.G."/>
            <person name="Najar F.Z."/>
            <person name="Ren Q."/>
            <person name="Zhu H."/>
            <person name="Song L."/>
            <person name="White J."/>
            <person name="Yuan X."/>
            <person name="Clifton S.W."/>
            <person name="Roe B.A."/>
            <person name="McLaughlin R.E."/>
        </authorList>
    </citation>
    <scope>NUCLEOTIDE SEQUENCE [LARGE SCALE GENOMIC DNA]</scope>
    <source>
        <strain>ATCC 700294 / SF370 / Serotype M1</strain>
    </source>
</reference>
<reference key="2">
    <citation type="journal article" date="2005" name="J. Infect. Dis.">
        <title>Evolutionary origin and emergence of a highly successful clone of serotype M1 group A Streptococcus involved multiple horizontal gene transfer events.</title>
        <authorList>
            <person name="Sumby P."/>
            <person name="Porcella S.F."/>
            <person name="Madrigal A.G."/>
            <person name="Barbian K.D."/>
            <person name="Virtaneva K."/>
            <person name="Ricklefs S.M."/>
            <person name="Sturdevant D.E."/>
            <person name="Graham M.R."/>
            <person name="Vuopio-Varkila J."/>
            <person name="Hoe N.P."/>
            <person name="Musser J.M."/>
        </authorList>
    </citation>
    <scope>NUCLEOTIDE SEQUENCE [LARGE SCALE GENOMIC DNA]</scope>
    <source>
        <strain>ATCC BAA-947 / MGAS5005 / Serotype M1</strain>
    </source>
</reference>
<comment type="similarity">
    <text evidence="1">Belongs to the bacterial ribosomal protein bL35 family.</text>
</comment>
<protein>
    <recommendedName>
        <fullName evidence="1">Large ribosomal subunit protein bL35</fullName>
    </recommendedName>
    <alternativeName>
        <fullName evidence="3">50S ribosomal protein L35</fullName>
    </alternativeName>
</protein>
<feature type="chain" id="PRO_0000177434" description="Large ribosomal subunit protein bL35">
    <location>
        <begin position="1"/>
        <end position="65"/>
    </location>
</feature>
<feature type="region of interest" description="Disordered" evidence="2">
    <location>
        <begin position="1"/>
        <end position="20"/>
    </location>
</feature>
<feature type="compositionally biased region" description="Basic residues" evidence="2">
    <location>
        <begin position="1"/>
        <end position="16"/>
    </location>
</feature>
<keyword id="KW-1185">Reference proteome</keyword>
<keyword id="KW-0687">Ribonucleoprotein</keyword>
<keyword id="KW-0689">Ribosomal protein</keyword>
<sequence length="65" mass="7465">MPKQKTHRASAKRFKRTGSGGLKRFRAFTSHRFHGKTKKQRRHLRKAGLVSSGDFKRIKAMVTGL</sequence>